<organism>
    <name type="scientific">Phaeosphaeria nodorum (strain SN15 / ATCC MYA-4574 / FGSC 10173)</name>
    <name type="common">Glume blotch fungus</name>
    <name type="synonym">Parastagonospora nodorum</name>
    <dbReference type="NCBI Taxonomy" id="321614"/>
    <lineage>
        <taxon>Eukaryota</taxon>
        <taxon>Fungi</taxon>
        <taxon>Dikarya</taxon>
        <taxon>Ascomycota</taxon>
        <taxon>Pezizomycotina</taxon>
        <taxon>Dothideomycetes</taxon>
        <taxon>Pleosporomycetidae</taxon>
        <taxon>Pleosporales</taxon>
        <taxon>Pleosporineae</taxon>
        <taxon>Phaeosphaeriaceae</taxon>
        <taxon>Parastagonospora</taxon>
    </lineage>
</organism>
<comment type="function">
    <text evidence="1">Required for the formation of N(7)-methylguanine at position 46 (m7G46) in tRNA. In the complex, it is required to stabilize and induce conformational changes of the catalytic subunit.</text>
</comment>
<comment type="pathway">
    <text evidence="1">tRNA modification; N(7)-methylguanine-tRNA biosynthesis.</text>
</comment>
<comment type="subunit">
    <text evidence="1">Forms a heterodimer with the catalytic subunit TRM8.</text>
</comment>
<comment type="subcellular location">
    <subcellularLocation>
        <location evidence="1">Nucleus</location>
    </subcellularLocation>
</comment>
<comment type="similarity">
    <text evidence="1">Belongs to the WD repeat TRM82 family.</text>
</comment>
<proteinExistence type="inferred from homology"/>
<accession>Q0TZA1</accession>
<protein>
    <recommendedName>
        <fullName evidence="1">tRNA (guanine-N(7)-)-methyltransferase non-catalytic subunit TRM82</fullName>
    </recommendedName>
    <alternativeName>
        <fullName evidence="1">Transfer RNA methyltransferase 82</fullName>
    </alternativeName>
</protein>
<evidence type="ECO:0000255" key="1">
    <source>
        <dbReference type="HAMAP-Rule" id="MF_03056"/>
    </source>
</evidence>
<dbReference type="EMBL" id="CH445360">
    <property type="protein sequence ID" value="EAT77461.1"/>
    <property type="molecule type" value="Genomic_DNA"/>
</dbReference>
<dbReference type="RefSeq" id="XP_001805395.1">
    <property type="nucleotide sequence ID" value="XM_001805343.1"/>
</dbReference>
<dbReference type="SMR" id="Q0TZA1"/>
<dbReference type="STRING" id="321614.Q0TZA1"/>
<dbReference type="EnsemblFungi" id="SNOT_15236">
    <property type="protein sequence ID" value="SNOT_15236"/>
    <property type="gene ID" value="SNOG_15236"/>
</dbReference>
<dbReference type="GeneID" id="5982323"/>
<dbReference type="KEGG" id="pno:SNOG_15236"/>
<dbReference type="VEuPathDB" id="FungiDB:JI435_152360"/>
<dbReference type="eggNOG" id="KOG3914">
    <property type="taxonomic scope" value="Eukaryota"/>
</dbReference>
<dbReference type="HOGENOM" id="CLU_022082_0_0_1"/>
<dbReference type="InParanoid" id="Q0TZA1"/>
<dbReference type="OMA" id="SERCMPK"/>
<dbReference type="OrthoDB" id="339900at2759"/>
<dbReference type="UniPathway" id="UPA00989"/>
<dbReference type="Proteomes" id="UP000001055">
    <property type="component" value="Unassembled WGS sequence"/>
</dbReference>
<dbReference type="GO" id="GO:0005829">
    <property type="term" value="C:cytosol"/>
    <property type="evidence" value="ECO:0000318"/>
    <property type="project" value="GO_Central"/>
</dbReference>
<dbReference type="GO" id="GO:0005634">
    <property type="term" value="C:nucleus"/>
    <property type="evidence" value="ECO:0000318"/>
    <property type="project" value="GO_Central"/>
</dbReference>
<dbReference type="GO" id="GO:0043527">
    <property type="term" value="C:tRNA methyltransferase complex"/>
    <property type="evidence" value="ECO:0000318"/>
    <property type="project" value="GO_Central"/>
</dbReference>
<dbReference type="GO" id="GO:0106004">
    <property type="term" value="P:tRNA (guanine-N7)-methylation"/>
    <property type="evidence" value="ECO:0007669"/>
    <property type="project" value="UniProtKB-UniRule"/>
</dbReference>
<dbReference type="GO" id="GO:0006400">
    <property type="term" value="P:tRNA modification"/>
    <property type="evidence" value="ECO:0000318"/>
    <property type="project" value="GO_Central"/>
</dbReference>
<dbReference type="Gene3D" id="2.130.10.10">
    <property type="entry name" value="YVTN repeat-like/Quinoprotein amine dehydrogenase"/>
    <property type="match status" value="1"/>
</dbReference>
<dbReference type="HAMAP" id="MF_03056">
    <property type="entry name" value="TRM82"/>
    <property type="match status" value="1"/>
</dbReference>
<dbReference type="InterPro" id="IPR028884">
    <property type="entry name" value="Trm82"/>
</dbReference>
<dbReference type="InterPro" id="IPR015943">
    <property type="entry name" value="WD40/YVTN_repeat-like_dom_sf"/>
</dbReference>
<dbReference type="InterPro" id="IPR036322">
    <property type="entry name" value="WD40_repeat_dom_sf"/>
</dbReference>
<dbReference type="InterPro" id="IPR001680">
    <property type="entry name" value="WD40_rpt"/>
</dbReference>
<dbReference type="PANTHER" id="PTHR16288:SF0">
    <property type="entry name" value="TRNA (GUANINE-N(7)-)-METHYLTRANSFERASE NON-CATALYTIC SUBUNIT WDR4"/>
    <property type="match status" value="1"/>
</dbReference>
<dbReference type="PANTHER" id="PTHR16288">
    <property type="entry name" value="WD40 REPEAT PROTEIN 4"/>
    <property type="match status" value="1"/>
</dbReference>
<dbReference type="SMART" id="SM00320">
    <property type="entry name" value="WD40"/>
    <property type="match status" value="3"/>
</dbReference>
<dbReference type="SUPFAM" id="SSF50978">
    <property type="entry name" value="WD40 repeat-like"/>
    <property type="match status" value="1"/>
</dbReference>
<sequence length="478" mass="52088">MAFPYQCLVARSESSADGAAWTLFGASGSKIVVQSSNGVASVWSRQAVQVLDPKDDDTQEPPGKRIKLSTPKEQKFNFSSLVLSNNGHYLVGVTGEDKCVRVFQIDAQSGLQQLSERCMSRRPSAITLTSDDSTILCADKFGDVYALPLLPSPEDEQVEAPAPALPLEEKDFTPSATVFTVHSGRNRRTLEEQLKQKAKGPAKPKEAITFRHDLLLGHVSMLTDLAFAKIGNKSYIITADRDEHIRISRGVPQAHIIEGFCFGHEEFVSRLCVTRSGLLVSGGGDAHLLVWDWRNFLLNEKLPLRDTVIKHLRSRPDLSSSFKDDASFKTAVSGIWEVPGIKETSEVLVACEGLPGLFNFNVGTGAVNGDSLSLMGNPLDVAFVQTSPNSWTTIVSIDNVHKAGSTSELRENADGARLQYFSKQVDGAWREDAEMGALVSSFALGGTDGPDLTTADDKAVRDILYHVENLRKRPGAED</sequence>
<keyword id="KW-0539">Nucleus</keyword>
<keyword id="KW-0677">Repeat</keyword>
<keyword id="KW-0819">tRNA processing</keyword>
<keyword id="KW-0853">WD repeat</keyword>
<feature type="chain" id="PRO_0000370523" description="tRNA (guanine-N(7)-)-methyltransferase non-catalytic subunit TRM82">
    <location>
        <begin position="1"/>
        <end position="478"/>
    </location>
</feature>
<feature type="repeat" description="WD 1">
    <location>
        <begin position="14"/>
        <end position="53"/>
    </location>
</feature>
<feature type="repeat" description="WD 2">
    <location>
        <begin position="73"/>
        <end position="113"/>
    </location>
</feature>
<feature type="repeat" description="WD 3">
    <location>
        <begin position="217"/>
        <end position="258"/>
    </location>
</feature>
<feature type="repeat" description="WD 4">
    <location>
        <begin position="263"/>
        <end position="301"/>
    </location>
</feature>
<reference key="1">
    <citation type="journal article" date="2007" name="Plant Cell">
        <title>Dothideomycete-plant interactions illuminated by genome sequencing and EST analysis of the wheat pathogen Stagonospora nodorum.</title>
        <authorList>
            <person name="Hane J.K."/>
            <person name="Lowe R.G.T."/>
            <person name="Solomon P.S."/>
            <person name="Tan K.-C."/>
            <person name="Schoch C.L."/>
            <person name="Spatafora J.W."/>
            <person name="Crous P.W."/>
            <person name="Kodira C.D."/>
            <person name="Birren B.W."/>
            <person name="Galagan J.E."/>
            <person name="Torriani S.F.F."/>
            <person name="McDonald B.A."/>
            <person name="Oliver R.P."/>
        </authorList>
    </citation>
    <scope>NUCLEOTIDE SEQUENCE [LARGE SCALE GENOMIC DNA]</scope>
    <source>
        <strain>SN15 / ATCC MYA-4574 / FGSC 10173</strain>
    </source>
</reference>
<gene>
    <name evidence="1" type="primary">TRM82</name>
    <name type="ORF">SNOG_15236</name>
</gene>
<name>TRM82_PHANO</name>